<protein>
    <recommendedName>
        <fullName>Potassium voltage-gated channel subfamily KQT member 4</fullName>
    </recommendedName>
    <alternativeName>
        <fullName>KQT-like 4</fullName>
    </alternativeName>
    <alternativeName>
        <fullName>Potassium channel subunit alpha KvLQT4</fullName>
    </alternativeName>
    <alternativeName>
        <fullName>Voltage-gated potassium channel subunit Kv7.4</fullName>
    </alternativeName>
</protein>
<keyword id="KW-1003">Cell membrane</keyword>
<keyword id="KW-1009">Hearing</keyword>
<keyword id="KW-0407">Ion channel</keyword>
<keyword id="KW-0406">Ion transport</keyword>
<keyword id="KW-0472">Membrane</keyword>
<keyword id="KW-0630">Potassium</keyword>
<keyword id="KW-0631">Potassium channel</keyword>
<keyword id="KW-0633">Potassium transport</keyword>
<keyword id="KW-1185">Reference proteome</keyword>
<keyword id="KW-0812">Transmembrane</keyword>
<keyword id="KW-1133">Transmembrane helix</keyword>
<keyword id="KW-0813">Transport</keyword>
<keyword id="KW-0851">Voltage-gated channel</keyword>
<gene>
    <name evidence="7" type="primary">Kcnq4</name>
</gene>
<comment type="function">
    <text evidence="2">Pore-forming subunit of the voltage-gated potassium (Kv) channel involved in the regulation of sensory cells excitability in the cochlea. KCNQ4/Kv7.4 channel is composed of 4 pore-forming subunits assembled as tetramers. Promotes the outflow of potassium ions in the repolarization phase of action potential which plays a role in regulating membrane potential of excitable cells. The channel conducts a slowly activating and deactivating current. Current often shows some inward rectification at positive potentials. Channel may be selectively permeable in vitro to other cations besides potassium, in decreasing order of affinity K(+) = Rb(+) &gt; Cs(+) &gt; Na(+). Important for normal physiological function of inner ear such as sensory perception of sound.</text>
</comment>
<comment type="catalytic activity">
    <reaction evidence="2">
        <text>K(+)(in) = K(+)(out)</text>
        <dbReference type="Rhea" id="RHEA:29463"/>
        <dbReference type="ChEBI" id="CHEBI:29103"/>
    </reaction>
</comment>
<comment type="activity regulation">
    <text evidence="2">Two molecules of phosphatidylinositol-4,5-bisphosphate (PIP2-I and PIP2-II) are essential to activate KCNQ4 channel by inducing the coupling of the voltage-sensing domain (VSD) and the pore-forming domain (PD). Upon channel activation, PIP2-I and PIP2-II disrupt the VSD-calmodulin/CALM interaction, causing the release of CALM from the VSD which triggers the opening of the gate. Calcium suppresses KCNQ4 channel current through calcium-bound CALM C-terminus. Therefore CALM acts as calcium sensor that controls channel activity.</text>
</comment>
<comment type="subunit">
    <text evidence="2">Homotetramer. Interacts (via C-terminus) with calmodulin; forms a heterooctameric structure (with 4:4 KCNQ1:CALM stoichiometry); the interaction is calcium-independent, constitutive, participates in the proper assembly of a functional channel. The interaction with calcium-free CALM controls channel trafficking whereas interaction with calcium-bound CALM regulates channel gating. May form a functional heteromultimeric channel with KCNQ3. Interacts with HSP90AB1; promotes cell surface expression of KCNQ4.</text>
</comment>
<comment type="subcellular location">
    <subcellularLocation>
        <location evidence="5">Basal cell membrane</location>
        <topology evidence="2">Multi-pass membrane protein</topology>
    </subcellularLocation>
    <text evidence="5">Situated at the basal membrane of cochlear outer hair cells.</text>
</comment>
<comment type="tissue specificity">
    <text evidence="5">Expressed in both the inner (IHCs) and the outer hair cells (OHCs) of the cochlea. Reciprocal longitudinal gradients of expression is present in IHCs and OHCs. The strongest expression in IHCs is in the base of the cochlea and in the apex for OHCs. A basal to apical gradient of expression is also present in both type I and type II spiral ganglion cells.</text>
</comment>
<comment type="developmental stage">
    <text evidence="5">At P0 expression is primarily in the basal hook to lower middle turn of the cochlea and progressively expands toward the apex over time. By P8, the expression is evident in both IHCs and OHCs along the entire length of the cochlea. Then the adult pattern begins to emerge, as expression in basal OHCs and in apical IHCs decreases.</text>
</comment>
<comment type="domain">
    <text evidence="2">Each channel subunit contains six transmembrane segments (S1-S6) with S1-S4 forming one voltage sensing domain (VSD) and S5-S6 contributing to form one quarter of an interlocking pore-forming domain (PD).</text>
</comment>
<comment type="domain">
    <text evidence="2">The CALM binding domains correspond to the first two membrane-proximal helical regions that interact with a single calmodulin/CALM molecule forming a clamp-like structure. CALM N-terminus binds to the second helix in both calcium-free and calcium-bound forms and regulates channel trafficking. CALM C-terminus binds to the first helice in calcium-free form; this interaction is disrupted by calcium binding which regulates channel electrophysiological activity.</text>
</comment>
<comment type="domain">
    <text evidence="2">The C-terminal assembly domain carries the major determinants of tetramerization and subunit assembly specificity. Its coiled-coil region is four-stranded.</text>
</comment>
<comment type="similarity">
    <text evidence="6">Belongs to the potassium channel family. KQT (TC 1.A.1.15) subfamily. Kv7.4/KCNQ4 sub-subfamily.</text>
</comment>
<reference key="1">
    <citation type="journal article" date="2004" name="Nature">
        <title>Genome sequence of the Brown Norway rat yields insights into mammalian evolution.</title>
        <authorList>
            <person name="Gibbs R.A."/>
            <person name="Weinstock G.M."/>
            <person name="Metzker M.L."/>
            <person name="Muzny D.M."/>
            <person name="Sodergren E.J."/>
            <person name="Scherer S."/>
            <person name="Scott G."/>
            <person name="Steffen D."/>
            <person name="Worley K.C."/>
            <person name="Burch P.E."/>
            <person name="Okwuonu G."/>
            <person name="Hines S."/>
            <person name="Lewis L."/>
            <person name="Deramo C."/>
            <person name="Delgado O."/>
            <person name="Dugan-Rocha S."/>
            <person name="Miner G."/>
            <person name="Morgan M."/>
            <person name="Hawes A."/>
            <person name="Gill R."/>
            <person name="Holt R.A."/>
            <person name="Adams M.D."/>
            <person name="Amanatides P.G."/>
            <person name="Baden-Tillson H."/>
            <person name="Barnstead M."/>
            <person name="Chin S."/>
            <person name="Evans C.A."/>
            <person name="Ferriera S."/>
            <person name="Fosler C."/>
            <person name="Glodek A."/>
            <person name="Gu Z."/>
            <person name="Jennings D."/>
            <person name="Kraft C.L."/>
            <person name="Nguyen T."/>
            <person name="Pfannkoch C.M."/>
            <person name="Sitter C."/>
            <person name="Sutton G.G."/>
            <person name="Venter J.C."/>
            <person name="Woodage T."/>
            <person name="Smith D."/>
            <person name="Lee H.-M."/>
            <person name="Gustafson E."/>
            <person name="Cahill P."/>
            <person name="Kana A."/>
            <person name="Doucette-Stamm L."/>
            <person name="Weinstock K."/>
            <person name="Fechtel K."/>
            <person name="Weiss R.B."/>
            <person name="Dunn D.M."/>
            <person name="Green E.D."/>
            <person name="Blakesley R.W."/>
            <person name="Bouffard G.G."/>
            <person name="De Jong P.J."/>
            <person name="Osoegawa K."/>
            <person name="Zhu B."/>
            <person name="Marra M."/>
            <person name="Schein J."/>
            <person name="Bosdet I."/>
            <person name="Fjell C."/>
            <person name="Jones S."/>
            <person name="Krzywinski M."/>
            <person name="Mathewson C."/>
            <person name="Siddiqui A."/>
            <person name="Wye N."/>
            <person name="McPherson J."/>
            <person name="Zhao S."/>
            <person name="Fraser C.M."/>
            <person name="Shetty J."/>
            <person name="Shatsman S."/>
            <person name="Geer K."/>
            <person name="Chen Y."/>
            <person name="Abramzon S."/>
            <person name="Nierman W.C."/>
            <person name="Havlak P.H."/>
            <person name="Chen R."/>
            <person name="Durbin K.J."/>
            <person name="Egan A."/>
            <person name="Ren Y."/>
            <person name="Song X.-Z."/>
            <person name="Li B."/>
            <person name="Liu Y."/>
            <person name="Qin X."/>
            <person name="Cawley S."/>
            <person name="Cooney A.J."/>
            <person name="D'Souza L.M."/>
            <person name="Martin K."/>
            <person name="Wu J.Q."/>
            <person name="Gonzalez-Garay M.L."/>
            <person name="Jackson A.R."/>
            <person name="Kalafus K.J."/>
            <person name="McLeod M.P."/>
            <person name="Milosavljevic A."/>
            <person name="Virk D."/>
            <person name="Volkov A."/>
            <person name="Wheeler D.A."/>
            <person name="Zhang Z."/>
            <person name="Bailey J.A."/>
            <person name="Eichler E.E."/>
            <person name="Tuzun E."/>
            <person name="Birney E."/>
            <person name="Mongin E."/>
            <person name="Ureta-Vidal A."/>
            <person name="Woodwark C."/>
            <person name="Zdobnov E."/>
            <person name="Bork P."/>
            <person name="Suyama M."/>
            <person name="Torrents D."/>
            <person name="Alexandersson M."/>
            <person name="Trask B.J."/>
            <person name="Young J.M."/>
            <person name="Huang H."/>
            <person name="Wang H."/>
            <person name="Xing H."/>
            <person name="Daniels S."/>
            <person name="Gietzen D."/>
            <person name="Schmidt J."/>
            <person name="Stevens K."/>
            <person name="Vitt U."/>
            <person name="Wingrove J."/>
            <person name="Camara F."/>
            <person name="Mar Alba M."/>
            <person name="Abril J.F."/>
            <person name="Guigo R."/>
            <person name="Smit A."/>
            <person name="Dubchak I."/>
            <person name="Rubin E.M."/>
            <person name="Couronne O."/>
            <person name="Poliakov A."/>
            <person name="Huebner N."/>
            <person name="Ganten D."/>
            <person name="Goesele C."/>
            <person name="Hummel O."/>
            <person name="Kreitler T."/>
            <person name="Lee Y.-A."/>
            <person name="Monti J."/>
            <person name="Schulz H."/>
            <person name="Zimdahl H."/>
            <person name="Himmelbauer H."/>
            <person name="Lehrach H."/>
            <person name="Jacob H.J."/>
            <person name="Bromberg S."/>
            <person name="Gullings-Handley J."/>
            <person name="Jensen-Seaman M.I."/>
            <person name="Kwitek A.E."/>
            <person name="Lazar J."/>
            <person name="Pasko D."/>
            <person name="Tonellato P.J."/>
            <person name="Twigger S."/>
            <person name="Ponting C.P."/>
            <person name="Duarte J.M."/>
            <person name="Rice S."/>
            <person name="Goodstadt L."/>
            <person name="Beatson S.A."/>
            <person name="Emes R.D."/>
            <person name="Winter E.E."/>
            <person name="Webber C."/>
            <person name="Brandt P."/>
            <person name="Nyakatura G."/>
            <person name="Adetobi M."/>
            <person name="Chiaromonte F."/>
            <person name="Elnitski L."/>
            <person name="Eswara P."/>
            <person name="Hardison R.C."/>
            <person name="Hou M."/>
            <person name="Kolbe D."/>
            <person name="Makova K."/>
            <person name="Miller W."/>
            <person name="Nekrutenko A."/>
            <person name="Riemer C."/>
            <person name="Schwartz S."/>
            <person name="Taylor J."/>
            <person name="Yang S."/>
            <person name="Zhang Y."/>
            <person name="Lindpaintner K."/>
            <person name="Andrews T.D."/>
            <person name="Caccamo M."/>
            <person name="Clamp M."/>
            <person name="Clarke L."/>
            <person name="Curwen V."/>
            <person name="Durbin R.M."/>
            <person name="Eyras E."/>
            <person name="Searle S.M."/>
            <person name="Cooper G.M."/>
            <person name="Batzoglou S."/>
            <person name="Brudno M."/>
            <person name="Sidow A."/>
            <person name="Stone E.A."/>
            <person name="Payseur B.A."/>
            <person name="Bourque G."/>
            <person name="Lopez-Otin C."/>
            <person name="Puente X.S."/>
            <person name="Chakrabarti K."/>
            <person name="Chatterji S."/>
            <person name="Dewey C."/>
            <person name="Pachter L."/>
            <person name="Bray N."/>
            <person name="Yap V.B."/>
            <person name="Caspi A."/>
            <person name="Tesler G."/>
            <person name="Pevzner P.A."/>
            <person name="Haussler D."/>
            <person name="Roskin K.M."/>
            <person name="Baertsch R."/>
            <person name="Clawson H."/>
            <person name="Furey T.S."/>
            <person name="Hinrichs A.S."/>
            <person name="Karolchik D."/>
            <person name="Kent W.J."/>
            <person name="Rosenbloom K.R."/>
            <person name="Trumbower H."/>
            <person name="Weirauch M."/>
            <person name="Cooper D.N."/>
            <person name="Stenson P.D."/>
            <person name="Ma B."/>
            <person name="Brent M."/>
            <person name="Arumugam M."/>
            <person name="Shteynberg D."/>
            <person name="Copley R.R."/>
            <person name="Taylor M.S."/>
            <person name="Riethman H."/>
            <person name="Mudunuri U."/>
            <person name="Peterson J."/>
            <person name="Guyer M."/>
            <person name="Felsenfeld A."/>
            <person name="Old S."/>
            <person name="Mockrin S."/>
            <person name="Collins F.S."/>
        </authorList>
    </citation>
    <scope>NUCLEOTIDE SEQUENCE [LARGE SCALE GENOMIC DNA]</scope>
    <source>
        <strain>Brown Norway</strain>
    </source>
</reference>
<reference key="2">
    <citation type="journal article" date="2000" name="Brain Res. Mol. Brain Res.">
        <title>Longitudinal gradients of KCNQ4 expression in spiral ganglion and cochlear hair cells correlate with progressive hearing loss in DFNA2(1).</title>
        <authorList>
            <person name="Beisel K.W."/>
            <person name="Nelson N.C."/>
            <person name="Delimont D.C."/>
            <person name="Fritzsch B."/>
        </authorList>
    </citation>
    <scope>NUCLEOTIDE SEQUENCE [MRNA] OF 438-606</scope>
    <scope>SUBCELLULAR LOCATION</scope>
    <scope>TISSUE SPECIFICITY</scope>
    <scope>DEVELOPMENTAL STAGE</scope>
    <source>
        <strain>Sprague-Dawley</strain>
        <tissue>Brain</tissue>
    </source>
</reference>
<proteinExistence type="evidence at transcript level"/>
<accession>Q9JK96</accession>
<accession>A0A0G2K666</accession>
<organism>
    <name type="scientific">Rattus norvegicus</name>
    <name type="common">Rat</name>
    <dbReference type="NCBI Taxonomy" id="10116"/>
    <lineage>
        <taxon>Eukaryota</taxon>
        <taxon>Metazoa</taxon>
        <taxon>Chordata</taxon>
        <taxon>Craniata</taxon>
        <taxon>Vertebrata</taxon>
        <taxon>Euteleostomi</taxon>
        <taxon>Mammalia</taxon>
        <taxon>Eutheria</taxon>
        <taxon>Euarchontoglires</taxon>
        <taxon>Glires</taxon>
        <taxon>Rodentia</taxon>
        <taxon>Myomorpha</taxon>
        <taxon>Muroidea</taxon>
        <taxon>Muridae</taxon>
        <taxon>Murinae</taxon>
        <taxon>Rattus</taxon>
    </lineage>
</organism>
<feature type="chain" id="PRO_0000054039" description="Potassium voltage-gated channel subfamily KQT member 4">
    <location>
        <begin position="1"/>
        <end position="695"/>
    </location>
</feature>
<feature type="topological domain" description="Cytoplasmic" evidence="6">
    <location>
        <begin position="1"/>
        <end position="96"/>
    </location>
</feature>
<feature type="transmembrane region" description="Helical; Name=Segment S1" evidence="2">
    <location>
        <begin position="97"/>
        <end position="118"/>
    </location>
</feature>
<feature type="topological domain" description="Extracellular" evidence="6">
    <location>
        <begin position="119"/>
        <end position="129"/>
    </location>
</feature>
<feature type="transmembrane region" description="Helical; Name=Segment S2" evidence="2">
    <location>
        <begin position="130"/>
        <end position="152"/>
    </location>
</feature>
<feature type="topological domain" description="Cytoplasmic" evidence="6">
    <location>
        <begin position="153"/>
        <end position="168"/>
    </location>
</feature>
<feature type="transmembrane region" description="Helical; Name=Segment S3" evidence="2">
    <location>
        <begin position="169"/>
        <end position="191"/>
    </location>
</feature>
<feature type="topological domain" description="Extracellular" evidence="6">
    <location>
        <begin position="192"/>
        <end position="202"/>
    </location>
</feature>
<feature type="transmembrane region" description="Helical; Voltage-sensor; Name=Segment S4" evidence="2">
    <location>
        <begin position="203"/>
        <end position="223"/>
    </location>
</feature>
<feature type="topological domain" description="Cytoplasmic" evidence="6">
    <location>
        <begin position="224"/>
        <end position="235"/>
    </location>
</feature>
<feature type="transmembrane region" description="Helical; Name=Segment S5" evidence="2">
    <location>
        <begin position="236"/>
        <end position="258"/>
    </location>
</feature>
<feature type="topological domain" description="Extracellular" evidence="6">
    <location>
        <begin position="259"/>
        <end position="270"/>
    </location>
</feature>
<feature type="intramembrane region" description="Pore-forming; Name=Segment H5" evidence="3">
    <location>
        <begin position="271"/>
        <end position="292"/>
    </location>
</feature>
<feature type="topological domain" description="Extracellular" evidence="6">
    <location>
        <position position="293"/>
    </location>
</feature>
<feature type="transmembrane region" description="Helical; Name=Segment S6" evidence="2">
    <location>
        <begin position="294"/>
        <end position="322"/>
    </location>
</feature>
<feature type="topological domain" description="Cytoplasmic" evidence="6">
    <location>
        <begin position="323"/>
        <end position="695"/>
    </location>
</feature>
<feature type="region of interest" description="Disordered" evidence="4">
    <location>
        <begin position="1"/>
        <end position="21"/>
    </location>
</feature>
<feature type="region of interest" description="Interaction with CALM" evidence="2">
    <location>
        <begin position="342"/>
        <end position="351"/>
    </location>
</feature>
<feature type="region of interest" description="Disordered" evidence="4">
    <location>
        <begin position="441"/>
        <end position="483"/>
    </location>
</feature>
<feature type="region of interest" description="Interaction with CALM" evidence="1">
    <location>
        <begin position="535"/>
        <end position="549"/>
    </location>
</feature>
<feature type="region of interest" description="C-terminal assembly domain (tetramerization)" evidence="2">
    <location>
        <begin position="546"/>
        <end position="650"/>
    </location>
</feature>
<feature type="region of interest" description="Disordered" evidence="4">
    <location>
        <begin position="588"/>
        <end position="608"/>
    </location>
</feature>
<feature type="compositionally biased region" description="Polar residues" evidence="4">
    <location>
        <begin position="442"/>
        <end position="452"/>
    </location>
</feature>
<feature type="compositionally biased region" description="Polar residues" evidence="4">
    <location>
        <begin position="464"/>
        <end position="483"/>
    </location>
</feature>
<feature type="compositionally biased region" description="Basic and acidic residues" evidence="4">
    <location>
        <begin position="591"/>
        <end position="605"/>
    </location>
</feature>
<feature type="binding site" evidence="2">
    <location>
        <position position="93"/>
    </location>
    <ligand>
        <name>a 1,2-diacyl-sn-glycero-3-phospho-(1D-myo-inositol-4,5-bisphosphate)</name>
        <dbReference type="ChEBI" id="CHEBI:58456"/>
        <label>1</label>
    </ligand>
</feature>
<feature type="binding site" evidence="2">
    <location>
        <position position="172"/>
    </location>
    <ligand>
        <name>a 1,2-diacyl-sn-glycero-3-phospho-(1D-myo-inositol-4,5-bisphosphate)</name>
        <dbReference type="ChEBI" id="CHEBI:58456"/>
        <label>1</label>
    </ligand>
</feature>
<feature type="binding site" evidence="2">
    <location>
        <position position="219"/>
    </location>
    <ligand>
        <name>a 1,2-diacyl-sn-glycero-3-phospho-(1D-myo-inositol-4,5-bisphosphate)</name>
        <dbReference type="ChEBI" id="CHEBI:58456"/>
        <label>1</label>
    </ligand>
</feature>
<feature type="binding site" evidence="2">
    <location>
        <position position="220"/>
    </location>
    <ligand>
        <name>a 1,2-diacyl-sn-glycero-3-phospho-(1D-myo-inositol-4,5-bisphosphate)</name>
        <dbReference type="ChEBI" id="CHEBI:58456"/>
        <label>1</label>
    </ligand>
</feature>
<feature type="binding site" description="in chain A" evidence="2">
    <location>
        <position position="220"/>
    </location>
    <ligand>
        <name>a 1,2-diacyl-sn-glycero-3-phospho-(1D-myo-inositol-4,5-bisphosphate)</name>
        <dbReference type="ChEBI" id="CHEBI:58456"/>
        <label>2</label>
        <note>ligand shared between two neighboring KCNQ4 subunits</note>
    </ligand>
</feature>
<feature type="binding site" evidence="2">
    <location>
        <position position="225"/>
    </location>
    <ligand>
        <name>a 1,2-diacyl-sn-glycero-3-phospho-(1D-myo-inositol-4,5-bisphosphate)</name>
        <dbReference type="ChEBI" id="CHEBI:58456"/>
        <label>1</label>
    </ligand>
</feature>
<feature type="binding site" description="in chain B" evidence="2">
    <location>
        <position position="235"/>
    </location>
    <ligand>
        <name>a 1,2-diacyl-sn-glycero-3-phospho-(1D-myo-inositol-4,5-bisphosphate)</name>
        <dbReference type="ChEBI" id="CHEBI:58456"/>
        <label>2</label>
        <note>ligand shared between two neighboring KCNQ4 subunits</note>
    </ligand>
</feature>
<feature type="binding site" description="in chain A" evidence="2">
    <location>
        <position position="330"/>
    </location>
    <ligand>
        <name>a 1,2-diacyl-sn-glycero-3-phospho-(1D-myo-inositol-4,5-bisphosphate)</name>
        <dbReference type="ChEBI" id="CHEBI:58456"/>
        <label>2</label>
        <note>ligand shared between two neighboring KCNQ4 subunits</note>
    </ligand>
</feature>
<feature type="binding site" description="in chain A" evidence="2">
    <location>
        <position position="333"/>
    </location>
    <ligand>
        <name>a 1,2-diacyl-sn-glycero-3-phospho-(1D-myo-inositol-4,5-bisphosphate)</name>
        <dbReference type="ChEBI" id="CHEBI:58456"/>
        <label>2</label>
        <note>ligand shared between two neighboring KCNQ4 subunits</note>
    </ligand>
</feature>
<feature type="sequence conflict" description="In Ref. 2; AAF66433." evidence="6" ref="2">
    <original>MSS</original>
    <variation>ISI</variation>
    <location>
        <begin position="442"/>
        <end position="444"/>
    </location>
</feature>
<feature type="sequence conflict" description="In Ref. 2; AAF66433." evidence="6" ref="2">
    <original>T</original>
    <variation>A</variation>
    <location>
        <position position="503"/>
    </location>
</feature>
<feature type="sequence conflict" description="In Ref. 2; AAF66433." evidence="6" ref="2">
    <original>T</original>
    <variation>A</variation>
    <location>
        <position position="529"/>
    </location>
</feature>
<name>KCNQ4_RAT</name>
<dbReference type="EMBL" id="AF249748">
    <property type="protein sequence ID" value="AAF66433.1"/>
    <property type="molecule type" value="mRNA"/>
</dbReference>
<dbReference type="EMBL" id="AC129237">
    <property type="status" value="NOT_ANNOTATED_CDS"/>
    <property type="molecule type" value="Genomic_DNA"/>
</dbReference>
<dbReference type="RefSeq" id="NP_001406504.1">
    <property type="nucleotide sequence ID" value="NM_001419575.1"/>
</dbReference>
<dbReference type="RefSeq" id="XP_008762331.1">
    <property type="nucleotide sequence ID" value="XM_008764109.1"/>
</dbReference>
<dbReference type="SMR" id="Q9JK96"/>
<dbReference type="CORUM" id="Q9JK96"/>
<dbReference type="STRING" id="10116.ENSRNOP00000073695"/>
<dbReference type="BindingDB" id="Q9JK96"/>
<dbReference type="ChEMBL" id="CHEMBL3621034"/>
<dbReference type="iPTMnet" id="Q9JK96"/>
<dbReference type="PhosphoSitePlus" id="Q9JK96"/>
<dbReference type="PaxDb" id="10116-ENSRNOP00000014231"/>
<dbReference type="ABCD" id="Q9JK96">
    <property type="antibodies" value="1 sequenced antibody"/>
</dbReference>
<dbReference type="Ensembl" id="ENSRNOT00000087445.2">
    <property type="protein sequence ID" value="ENSRNOP00000073695.1"/>
    <property type="gene ID" value="ENSRNOG00000060435.2"/>
</dbReference>
<dbReference type="GeneID" id="298496"/>
<dbReference type="UCSC" id="RGD:61799">
    <property type="organism name" value="rat"/>
</dbReference>
<dbReference type="AGR" id="RGD:61799"/>
<dbReference type="RGD" id="61799">
    <property type="gene designation" value="Kcnq4"/>
</dbReference>
<dbReference type="eggNOG" id="KOG1419">
    <property type="taxonomic scope" value="Eukaryota"/>
</dbReference>
<dbReference type="GeneTree" id="ENSGT00940000159209"/>
<dbReference type="InParanoid" id="Q9JK96"/>
<dbReference type="OMA" id="YATCLHM"/>
<dbReference type="PhylomeDB" id="Q9JK96"/>
<dbReference type="Proteomes" id="UP000002494">
    <property type="component" value="Chromosome 5"/>
</dbReference>
<dbReference type="Bgee" id="ENSRNOG00000060435">
    <property type="expression patterns" value="Expressed in skeletal muscle tissue and 15 other cell types or tissues"/>
</dbReference>
<dbReference type="GO" id="GO:0009925">
    <property type="term" value="C:basal plasma membrane"/>
    <property type="evidence" value="ECO:0007669"/>
    <property type="project" value="UniProtKB-SubCell"/>
</dbReference>
<dbReference type="GO" id="GO:0034702">
    <property type="term" value="C:monoatomic ion channel complex"/>
    <property type="evidence" value="ECO:0007669"/>
    <property type="project" value="UniProtKB-KW"/>
</dbReference>
<dbReference type="GO" id="GO:0005267">
    <property type="term" value="F:potassium channel activity"/>
    <property type="evidence" value="ECO:0000314"/>
    <property type="project" value="RGD"/>
</dbReference>
<dbReference type="GO" id="GO:0005249">
    <property type="term" value="F:voltage-gated potassium channel activity"/>
    <property type="evidence" value="ECO:0000250"/>
    <property type="project" value="UniProtKB"/>
</dbReference>
<dbReference type="GO" id="GO:0042472">
    <property type="term" value="P:inner ear morphogenesis"/>
    <property type="evidence" value="ECO:0000266"/>
    <property type="project" value="RGD"/>
</dbReference>
<dbReference type="GO" id="GO:0032227">
    <property type="term" value="P:negative regulation of synaptic transmission, dopaminergic"/>
    <property type="evidence" value="ECO:0000315"/>
    <property type="project" value="RGD"/>
</dbReference>
<dbReference type="GO" id="GO:0006813">
    <property type="term" value="P:potassium ion transport"/>
    <property type="evidence" value="ECO:0000314"/>
    <property type="project" value="RGD"/>
</dbReference>
<dbReference type="GO" id="GO:0007605">
    <property type="term" value="P:sensory perception of sound"/>
    <property type="evidence" value="ECO:0000266"/>
    <property type="project" value="RGD"/>
</dbReference>
<dbReference type="FunFam" id="1.20.120.350:FF:000017">
    <property type="entry name" value="potassium voltage-gated channel subfamily KQT member 1"/>
    <property type="match status" value="1"/>
</dbReference>
<dbReference type="FunFam" id="1.10.287.70:FF:000016">
    <property type="entry name" value="Putative potassium voltage-gated channel subfamily KQT member 2"/>
    <property type="match status" value="1"/>
</dbReference>
<dbReference type="Gene3D" id="1.10.287.70">
    <property type="match status" value="1"/>
</dbReference>
<dbReference type="Gene3D" id="6.10.140.1910">
    <property type="match status" value="2"/>
</dbReference>
<dbReference type="InterPro" id="IPR005821">
    <property type="entry name" value="Ion_trans_dom"/>
</dbReference>
<dbReference type="InterPro" id="IPR003937">
    <property type="entry name" value="K_chnl_volt-dep_KCNQ"/>
</dbReference>
<dbReference type="InterPro" id="IPR013821">
    <property type="entry name" value="K_chnl_volt-dep_KCNQ_C"/>
</dbReference>
<dbReference type="PANTHER" id="PTHR47735">
    <property type="entry name" value="POTASSIUM VOLTAGE-GATED CHANNEL SUBFAMILY KQT MEMBER 4"/>
    <property type="match status" value="1"/>
</dbReference>
<dbReference type="PANTHER" id="PTHR47735:SF7">
    <property type="entry name" value="POTASSIUM VOLTAGE-GATED CHANNEL SUBFAMILY KQT MEMBER 4"/>
    <property type="match status" value="1"/>
</dbReference>
<dbReference type="Pfam" id="PF00520">
    <property type="entry name" value="Ion_trans"/>
    <property type="match status" value="1"/>
</dbReference>
<dbReference type="Pfam" id="PF03520">
    <property type="entry name" value="KCNQ_channel"/>
    <property type="match status" value="1"/>
</dbReference>
<dbReference type="PRINTS" id="PR00169">
    <property type="entry name" value="KCHANNEL"/>
</dbReference>
<dbReference type="PRINTS" id="PR01459">
    <property type="entry name" value="KCNQCHANNEL"/>
</dbReference>
<dbReference type="SUPFAM" id="SSF81324">
    <property type="entry name" value="Voltage-gated potassium channels"/>
    <property type="match status" value="1"/>
</dbReference>
<sequence>MAEAPPRRLGLGPPPGDAPRAELVALTAVQSEQGEAGGGGSPRRLGLLGSPLPPGAPLPGPGSGSGSACGQRSSAAHKRYRRLQNWVYNVLERPRGWAFVYHVFIFLLVFSCLVLSVLSTIQEHQELANECLLILEFVMIVVFGLEYIIRVWSAGCCCRYRGWQGRFRFARKPFCVIDFIVFVASVAVIAAGTQGNIFATSALRSMRFLQILRMVRMDRRGGTWKLLGSVVYAHSKELITAWYIGFLVLIFASFLVYLAEKDANSDFSSYADSLWWGTITLTTIGYGDKTPHTWLGRVLAAGFALLGISFFALPAGILGSGFALKVQEQHRQKHFEKRRMPAANLIQAAWRLYSTDTSRAYLTATWYYYDSILPSFRELALLFEHIQRARNGGLRPLEVRRAPVPDGAASRYPPVATCHRPGSASFCPGESSRMGIKDRIRMSSSQKRTGPSKQHLAPPPIPTSPSSEQVGEASSPSKVQKSWSFNDRTRFRASLRLKPRCSTEEGPSEEVAEEKSYQCELTVDDVMPTVKTVIRSVRILKFLVAKRKFKETLRPYDVKDVIEQYSAGHLDMLGRIKSLQARVDQIVGRGPGDRKTREKGDKGPSDTEAVDEISMMGRVVKVEKQVQSIEHKLDLLLGFYSRCLRSGTSASLGTVQVPLFDPDITSDYHSPVDHEDISVSAQTLSISRSVSTNMD</sequence>
<evidence type="ECO:0000250" key="1">
    <source>
        <dbReference type="UniProtKB" id="P51787"/>
    </source>
</evidence>
<evidence type="ECO:0000250" key="2">
    <source>
        <dbReference type="UniProtKB" id="P56696"/>
    </source>
</evidence>
<evidence type="ECO:0000255" key="3"/>
<evidence type="ECO:0000256" key="4">
    <source>
        <dbReference type="SAM" id="MobiDB-lite"/>
    </source>
</evidence>
<evidence type="ECO:0000269" key="5">
    <source>
    </source>
</evidence>
<evidence type="ECO:0000305" key="6"/>
<evidence type="ECO:0000312" key="7">
    <source>
        <dbReference type="RGD" id="61799"/>
    </source>
</evidence>